<reference key="1">
    <citation type="journal article" date="2009" name="PLoS Biol.">
        <title>Lineage-specific biology revealed by a finished genome assembly of the mouse.</title>
        <authorList>
            <person name="Church D.M."/>
            <person name="Goodstadt L."/>
            <person name="Hillier L.W."/>
            <person name="Zody M.C."/>
            <person name="Goldstein S."/>
            <person name="She X."/>
            <person name="Bult C.J."/>
            <person name="Agarwala R."/>
            <person name="Cherry J.L."/>
            <person name="DiCuccio M."/>
            <person name="Hlavina W."/>
            <person name="Kapustin Y."/>
            <person name="Meric P."/>
            <person name="Maglott D."/>
            <person name="Birtle Z."/>
            <person name="Marques A.C."/>
            <person name="Graves T."/>
            <person name="Zhou S."/>
            <person name="Teague B."/>
            <person name="Potamousis K."/>
            <person name="Churas C."/>
            <person name="Place M."/>
            <person name="Herschleb J."/>
            <person name="Runnheim R."/>
            <person name="Forrest D."/>
            <person name="Amos-Landgraf J."/>
            <person name="Schwartz D.C."/>
            <person name="Cheng Z."/>
            <person name="Lindblad-Toh K."/>
            <person name="Eichler E.E."/>
            <person name="Ponting C.P."/>
        </authorList>
    </citation>
    <scope>NUCLEOTIDE SEQUENCE [LARGE SCALE GENOMIC DNA]</scope>
    <source>
        <strain>C57BL/6J</strain>
    </source>
</reference>
<proteinExistence type="inferred from homology"/>
<feature type="chain" id="PRO_0000348960" description="Keratin-associated protein 16-1">
    <location>
        <begin position="1"/>
        <end position="502"/>
    </location>
</feature>
<feature type="repeat" description="1">
    <location>
        <begin position="4"/>
        <end position="8"/>
    </location>
</feature>
<feature type="repeat" description="2">
    <location>
        <begin position="58"/>
        <end position="62"/>
    </location>
</feature>
<feature type="repeat" description="3">
    <location>
        <begin position="73"/>
        <end position="77"/>
    </location>
</feature>
<feature type="repeat" description="4">
    <location>
        <begin position="93"/>
        <end position="97"/>
    </location>
</feature>
<feature type="repeat" description="5">
    <location>
        <begin position="108"/>
        <end position="112"/>
    </location>
</feature>
<feature type="repeat" description="6">
    <location>
        <begin position="113"/>
        <end position="117"/>
    </location>
</feature>
<feature type="repeat" description="7">
    <location>
        <begin position="133"/>
        <end position="137"/>
    </location>
</feature>
<feature type="repeat" description="8">
    <location>
        <begin position="152"/>
        <end position="156"/>
    </location>
</feature>
<feature type="repeat" description="9">
    <location>
        <begin position="177"/>
        <end position="181"/>
    </location>
</feature>
<feature type="repeat" description="10">
    <location>
        <begin position="187"/>
        <end position="191"/>
    </location>
</feature>
<feature type="repeat" description="11">
    <location>
        <begin position="212"/>
        <end position="216"/>
    </location>
</feature>
<feature type="repeat" description="12">
    <location>
        <begin position="222"/>
        <end position="226"/>
    </location>
</feature>
<feature type="repeat" description="13">
    <location>
        <begin position="272"/>
        <end position="276"/>
    </location>
</feature>
<feature type="repeat" description="14">
    <location>
        <begin position="292"/>
        <end position="296"/>
    </location>
</feature>
<feature type="repeat" description="15">
    <location>
        <begin position="347"/>
        <end position="351"/>
    </location>
</feature>
<feature type="region of interest" description="15 X 5 AA repeats of C-C-X(3)">
    <location>
        <begin position="73"/>
        <end position="307"/>
    </location>
</feature>
<feature type="region of interest" description="Disordered" evidence="2">
    <location>
        <begin position="435"/>
        <end position="502"/>
    </location>
</feature>
<feature type="compositionally biased region" description="Low complexity" evidence="2">
    <location>
        <begin position="489"/>
        <end position="502"/>
    </location>
</feature>
<name>KR161_MOUSE</name>
<sequence>MSGCCCSRKCPSLPAISLCSTEVSCGGPVCLPSSCRSQTWQLVTCEDSCGSSGCGSQCCQPSCSVSSCCQPVCCEATICEPSCSVSSCAQPVCCEATICEPSCSMGSCCQPVCCEATICEPSCSVSTCAQPVCCEATMCQPSCSVSSCQPVCCETSSCQPVLCLPATCQPVICKPCCCQPVICEPSCCSAVCAVPASCQPMICEPVVCEPACCQPVCPTPSCCPSVCSAASSCQPVGCETSPCEPPCSEASACQPSACMALVCEPVCLRPVCCVQGPCEPPCVSSSCQDSSCCVSSICQPVCPEPSPCLPSVCVPTPCQPSCYIVKRCRSVSCEPISCPSPSCQPACCRPGSSASAICQPACPPRTFYIPSSCKPPCSPVSCRPICRPICSGPITFRQPYVTSITYRPACYRSCYSILRRPTCLASYSYRPVCSRQPCTDSDNDKCDSKKPTSSQPDCADSTPVKTEVSDETPCQPSEIKPASPITREAAAPQPAASKPADR</sequence>
<dbReference type="EMBL" id="AL592545">
    <property type="status" value="NOT_ANNOTATED_CDS"/>
    <property type="molecule type" value="Genomic_DNA"/>
</dbReference>
<dbReference type="CCDS" id="CCDS56804.1"/>
<dbReference type="RefSeq" id="NP_001242986.1">
    <property type="nucleotide sequence ID" value="NM_001256057.1"/>
</dbReference>
<dbReference type="STRING" id="10090.ENSMUSP00000100671"/>
<dbReference type="GlyGen" id="A2A5X5">
    <property type="glycosylation" value="1 site"/>
</dbReference>
<dbReference type="iPTMnet" id="A2A5X5"/>
<dbReference type="PhosphoSitePlus" id="A2A5X5"/>
<dbReference type="PaxDb" id="10090-ENSMUSP00000100671"/>
<dbReference type="ProteomicsDB" id="264797"/>
<dbReference type="Antibodypedia" id="77982">
    <property type="antibodies" value="5 antibodies from 5 providers"/>
</dbReference>
<dbReference type="Ensembl" id="ENSMUST00000105050.4">
    <property type="protein sequence ID" value="ENSMUSP00000100671.3"/>
    <property type="gene ID" value="ENSMUSG00000078253.4"/>
</dbReference>
<dbReference type="GeneID" id="100504183"/>
<dbReference type="KEGG" id="mmu:100504183"/>
<dbReference type="UCSC" id="uc029rod.1">
    <property type="organism name" value="mouse"/>
</dbReference>
<dbReference type="AGR" id="MGI:3650326"/>
<dbReference type="CTD" id="100505753"/>
<dbReference type="MGI" id="MGI:3650326">
    <property type="gene designation" value="Krtap16-1"/>
</dbReference>
<dbReference type="VEuPathDB" id="HostDB:ENSMUSG00000078253"/>
<dbReference type="eggNOG" id="KOG4726">
    <property type="taxonomic scope" value="Eukaryota"/>
</dbReference>
<dbReference type="GeneTree" id="ENSGT00940000163658"/>
<dbReference type="HOGENOM" id="CLU_573136_0_0_1"/>
<dbReference type="InParanoid" id="A2A5X5"/>
<dbReference type="OMA" id="VICEPSC"/>
<dbReference type="OrthoDB" id="9451506at2759"/>
<dbReference type="PhylomeDB" id="A2A5X5"/>
<dbReference type="Reactome" id="R-MMU-6805567">
    <property type="pathway name" value="Keratinization"/>
</dbReference>
<dbReference type="BioGRID-ORCS" id="100504183">
    <property type="hits" value="2 hits in 75 CRISPR screens"/>
</dbReference>
<dbReference type="PRO" id="PR:A2A5X5"/>
<dbReference type="Proteomes" id="UP000000589">
    <property type="component" value="Chromosome 11"/>
</dbReference>
<dbReference type="RNAct" id="A2A5X5">
    <property type="molecule type" value="protein"/>
</dbReference>
<dbReference type="Bgee" id="ENSMUSG00000078253">
    <property type="expression patterns" value="Expressed in lip and 4 other cell types or tissues"/>
</dbReference>
<dbReference type="GO" id="GO:0005829">
    <property type="term" value="C:cytosol"/>
    <property type="evidence" value="ECO:0007669"/>
    <property type="project" value="UniProtKB-ARBA"/>
</dbReference>
<dbReference type="GO" id="GO:0045095">
    <property type="term" value="C:keratin filament"/>
    <property type="evidence" value="ECO:0007669"/>
    <property type="project" value="InterPro"/>
</dbReference>
<dbReference type="InterPro" id="IPR002494">
    <property type="entry name" value="KAP"/>
</dbReference>
<dbReference type="PANTHER" id="PTHR23262">
    <property type="entry name" value="KERATIN ASSOCIATED PROTEIN"/>
    <property type="match status" value="1"/>
</dbReference>
<dbReference type="PANTHER" id="PTHR23262:SF55">
    <property type="entry name" value="KERATIN-ASSOCIATED PROTEIN 16-1"/>
    <property type="match status" value="1"/>
</dbReference>
<dbReference type="Pfam" id="PF13885">
    <property type="entry name" value="Keratin_B2_2"/>
    <property type="match status" value="3"/>
</dbReference>
<accession>A2A5X5</accession>
<comment type="function">
    <text>In the hair cortex, hair keratin intermediate filaments are embedded in an interfilamentous matrix, consisting of hair keratin-associated proteins (KRTAP), which are essential for the formation of a rigid and resistant hair shaft through their extensive disulfide bond cross-linking with abundant cysteine residues of hair keratins. The matrix proteins include the high-sulfur and high-glycine-tyrosine keratins.</text>
</comment>
<comment type="subunit">
    <text evidence="1">Interacts with hair keratins.</text>
</comment>
<comment type="similarity">
    <text evidence="3">Belongs to the KRTAP type 16 family.</text>
</comment>
<evidence type="ECO:0000250" key="1"/>
<evidence type="ECO:0000256" key="2">
    <source>
        <dbReference type="SAM" id="MobiDB-lite"/>
    </source>
</evidence>
<evidence type="ECO:0000305" key="3"/>
<keyword id="KW-0416">Keratin</keyword>
<keyword id="KW-1185">Reference proteome</keyword>
<keyword id="KW-0677">Repeat</keyword>
<protein>
    <recommendedName>
        <fullName>Keratin-associated protein 16-1</fullName>
    </recommendedName>
</protein>
<gene>
    <name type="primary">Krtap16-1</name>
    <name type="synonym">Gm11570</name>
</gene>
<organism>
    <name type="scientific">Mus musculus</name>
    <name type="common">Mouse</name>
    <dbReference type="NCBI Taxonomy" id="10090"/>
    <lineage>
        <taxon>Eukaryota</taxon>
        <taxon>Metazoa</taxon>
        <taxon>Chordata</taxon>
        <taxon>Craniata</taxon>
        <taxon>Vertebrata</taxon>
        <taxon>Euteleostomi</taxon>
        <taxon>Mammalia</taxon>
        <taxon>Eutheria</taxon>
        <taxon>Euarchontoglires</taxon>
        <taxon>Glires</taxon>
        <taxon>Rodentia</taxon>
        <taxon>Myomorpha</taxon>
        <taxon>Muroidea</taxon>
        <taxon>Muridae</taxon>
        <taxon>Murinae</taxon>
        <taxon>Mus</taxon>
        <taxon>Mus</taxon>
    </lineage>
</organism>